<dbReference type="EMBL" id="CP001154">
    <property type="protein sequence ID" value="ACO75736.1"/>
    <property type="molecule type" value="Genomic_DNA"/>
</dbReference>
<dbReference type="RefSeq" id="WP_012698199.1">
    <property type="nucleotide sequence ID" value="NC_012559.1"/>
</dbReference>
<dbReference type="SMR" id="C1DDA4"/>
<dbReference type="STRING" id="557598.LHK_02755"/>
<dbReference type="GeneID" id="75110041"/>
<dbReference type="KEGG" id="lhk:LHK_02755"/>
<dbReference type="eggNOG" id="COG0291">
    <property type="taxonomic scope" value="Bacteria"/>
</dbReference>
<dbReference type="HOGENOM" id="CLU_169643_1_0_4"/>
<dbReference type="Proteomes" id="UP000002010">
    <property type="component" value="Chromosome"/>
</dbReference>
<dbReference type="GO" id="GO:0022625">
    <property type="term" value="C:cytosolic large ribosomal subunit"/>
    <property type="evidence" value="ECO:0007669"/>
    <property type="project" value="TreeGrafter"/>
</dbReference>
<dbReference type="GO" id="GO:0003735">
    <property type="term" value="F:structural constituent of ribosome"/>
    <property type="evidence" value="ECO:0007669"/>
    <property type="project" value="InterPro"/>
</dbReference>
<dbReference type="GO" id="GO:0006412">
    <property type="term" value="P:translation"/>
    <property type="evidence" value="ECO:0007669"/>
    <property type="project" value="UniProtKB-UniRule"/>
</dbReference>
<dbReference type="FunFam" id="4.10.410.60:FF:000001">
    <property type="entry name" value="50S ribosomal protein L35"/>
    <property type="match status" value="1"/>
</dbReference>
<dbReference type="Gene3D" id="4.10.410.60">
    <property type="match status" value="1"/>
</dbReference>
<dbReference type="HAMAP" id="MF_00514">
    <property type="entry name" value="Ribosomal_bL35"/>
    <property type="match status" value="1"/>
</dbReference>
<dbReference type="InterPro" id="IPR001706">
    <property type="entry name" value="Ribosomal_bL35"/>
</dbReference>
<dbReference type="InterPro" id="IPR021137">
    <property type="entry name" value="Ribosomal_bL35-like"/>
</dbReference>
<dbReference type="InterPro" id="IPR037229">
    <property type="entry name" value="Ribosomal_bL35_sf"/>
</dbReference>
<dbReference type="NCBIfam" id="TIGR00001">
    <property type="entry name" value="rpmI_bact"/>
    <property type="match status" value="1"/>
</dbReference>
<dbReference type="PANTHER" id="PTHR33343">
    <property type="entry name" value="54S RIBOSOMAL PROTEIN BL35M"/>
    <property type="match status" value="1"/>
</dbReference>
<dbReference type="PANTHER" id="PTHR33343:SF1">
    <property type="entry name" value="LARGE RIBOSOMAL SUBUNIT PROTEIN BL35M"/>
    <property type="match status" value="1"/>
</dbReference>
<dbReference type="Pfam" id="PF01632">
    <property type="entry name" value="Ribosomal_L35p"/>
    <property type="match status" value="1"/>
</dbReference>
<dbReference type="PRINTS" id="PR00064">
    <property type="entry name" value="RIBOSOMALL35"/>
</dbReference>
<dbReference type="SUPFAM" id="SSF143034">
    <property type="entry name" value="L35p-like"/>
    <property type="match status" value="1"/>
</dbReference>
<feature type="chain" id="PRO_1000194077" description="Large ribosomal subunit protein bL35">
    <location>
        <begin position="1"/>
        <end position="65"/>
    </location>
</feature>
<organism>
    <name type="scientific">Laribacter hongkongensis (strain HLHK9)</name>
    <dbReference type="NCBI Taxonomy" id="557598"/>
    <lineage>
        <taxon>Bacteria</taxon>
        <taxon>Pseudomonadati</taxon>
        <taxon>Pseudomonadota</taxon>
        <taxon>Betaproteobacteria</taxon>
        <taxon>Neisseriales</taxon>
        <taxon>Aquaspirillaceae</taxon>
        <taxon>Laribacter</taxon>
    </lineage>
</organism>
<keyword id="KW-1185">Reference proteome</keyword>
<keyword id="KW-0687">Ribonucleoprotein</keyword>
<keyword id="KW-0689">Ribosomal protein</keyword>
<proteinExistence type="inferred from homology"/>
<gene>
    <name evidence="1" type="primary">rpmI</name>
    <name type="ordered locus">LHK_02755</name>
</gene>
<reference key="1">
    <citation type="journal article" date="2009" name="PLoS Genet.">
        <title>The complete genome and proteome of Laribacter hongkongensis reveal potential mechanisms for adaptations to different temperatures and habitats.</title>
        <authorList>
            <person name="Woo P.C.Y."/>
            <person name="Lau S.K.P."/>
            <person name="Tse H."/>
            <person name="Teng J.L.L."/>
            <person name="Curreem S.O."/>
            <person name="Tsang A.K.L."/>
            <person name="Fan R.Y.Y."/>
            <person name="Wong G.K.M."/>
            <person name="Huang Y."/>
            <person name="Loman N.J."/>
            <person name="Snyder L.A.S."/>
            <person name="Cai J.J."/>
            <person name="Huang J.-D."/>
            <person name="Mak W."/>
            <person name="Pallen M.J."/>
            <person name="Lok S."/>
            <person name="Yuen K.-Y."/>
        </authorList>
    </citation>
    <scope>NUCLEOTIDE SEQUENCE [LARGE SCALE GENOMIC DNA]</scope>
    <source>
        <strain>HLHK9</strain>
    </source>
</reference>
<protein>
    <recommendedName>
        <fullName evidence="1">Large ribosomal subunit protein bL35</fullName>
    </recommendedName>
    <alternativeName>
        <fullName evidence="2">50S ribosomal protein L35</fullName>
    </alternativeName>
</protein>
<name>RL35_LARHH</name>
<sequence>MPKMKTKSSAKKRLKVLGNGGVKRSMAFKRHILTKKTTKTKRQLRGTVMVHETNMASVRAMMPYA</sequence>
<comment type="similarity">
    <text evidence="1">Belongs to the bacterial ribosomal protein bL35 family.</text>
</comment>
<evidence type="ECO:0000255" key="1">
    <source>
        <dbReference type="HAMAP-Rule" id="MF_00514"/>
    </source>
</evidence>
<evidence type="ECO:0000305" key="2"/>
<accession>C1DDA4</accession>